<keyword id="KW-0004">4Fe-4S</keyword>
<keyword id="KW-0028">Amino-acid biosynthesis</keyword>
<keyword id="KW-0198">Cysteine biosynthesis</keyword>
<keyword id="KW-0349">Heme</keyword>
<keyword id="KW-0408">Iron</keyword>
<keyword id="KW-0411">Iron-sulfur</keyword>
<keyword id="KW-0479">Metal-binding</keyword>
<keyword id="KW-0521">NADP</keyword>
<keyword id="KW-0560">Oxidoreductase</keyword>
<protein>
    <recommendedName>
        <fullName evidence="1">Sulfite reductase [NADPH] hemoprotein beta-component 1</fullName>
        <shortName evidence="1">SiR-HP 1</shortName>
        <shortName evidence="1">SiRHP 1</shortName>
        <ecNumber evidence="1">1.8.1.2</ecNumber>
    </recommendedName>
</protein>
<dbReference type="EC" id="1.8.1.2" evidence="1"/>
<dbReference type="EMBL" id="CP001657">
    <property type="protein sequence ID" value="ACT14322.1"/>
    <property type="molecule type" value="Genomic_DNA"/>
</dbReference>
<dbReference type="SMR" id="C6DCZ7"/>
<dbReference type="STRING" id="561230.PC1_3306"/>
<dbReference type="KEGG" id="pct:PC1_3306"/>
<dbReference type="eggNOG" id="COG0155">
    <property type="taxonomic scope" value="Bacteria"/>
</dbReference>
<dbReference type="HOGENOM" id="CLU_001975_3_2_6"/>
<dbReference type="OrthoDB" id="3189055at2"/>
<dbReference type="UniPathway" id="UPA00140">
    <property type="reaction ID" value="UER00207"/>
</dbReference>
<dbReference type="Proteomes" id="UP000002736">
    <property type="component" value="Chromosome"/>
</dbReference>
<dbReference type="GO" id="GO:0009337">
    <property type="term" value="C:sulfite reductase complex (NADPH)"/>
    <property type="evidence" value="ECO:0007669"/>
    <property type="project" value="InterPro"/>
</dbReference>
<dbReference type="GO" id="GO:0051539">
    <property type="term" value="F:4 iron, 4 sulfur cluster binding"/>
    <property type="evidence" value="ECO:0007669"/>
    <property type="project" value="UniProtKB-KW"/>
</dbReference>
<dbReference type="GO" id="GO:0020037">
    <property type="term" value="F:heme binding"/>
    <property type="evidence" value="ECO:0007669"/>
    <property type="project" value="InterPro"/>
</dbReference>
<dbReference type="GO" id="GO:0046872">
    <property type="term" value="F:metal ion binding"/>
    <property type="evidence" value="ECO:0007669"/>
    <property type="project" value="UniProtKB-KW"/>
</dbReference>
<dbReference type="GO" id="GO:0050661">
    <property type="term" value="F:NADP binding"/>
    <property type="evidence" value="ECO:0007669"/>
    <property type="project" value="InterPro"/>
</dbReference>
<dbReference type="GO" id="GO:0050311">
    <property type="term" value="F:sulfite reductase (ferredoxin) activity"/>
    <property type="evidence" value="ECO:0007669"/>
    <property type="project" value="TreeGrafter"/>
</dbReference>
<dbReference type="GO" id="GO:0004783">
    <property type="term" value="F:sulfite reductase (NADPH) activity"/>
    <property type="evidence" value="ECO:0007669"/>
    <property type="project" value="UniProtKB-UniRule"/>
</dbReference>
<dbReference type="GO" id="GO:0019344">
    <property type="term" value="P:cysteine biosynthetic process"/>
    <property type="evidence" value="ECO:0007669"/>
    <property type="project" value="UniProtKB-KW"/>
</dbReference>
<dbReference type="GO" id="GO:0070814">
    <property type="term" value="P:hydrogen sulfide biosynthetic process"/>
    <property type="evidence" value="ECO:0007669"/>
    <property type="project" value="UniProtKB-UniRule"/>
</dbReference>
<dbReference type="GO" id="GO:0000103">
    <property type="term" value="P:sulfate assimilation"/>
    <property type="evidence" value="ECO:0007669"/>
    <property type="project" value="UniProtKB-UniRule"/>
</dbReference>
<dbReference type="FunFam" id="3.30.413.10:FF:000003">
    <property type="entry name" value="Sulfite reductase [NADPH] hemoprotein beta-component"/>
    <property type="match status" value="1"/>
</dbReference>
<dbReference type="FunFam" id="3.30.413.10:FF:000004">
    <property type="entry name" value="Sulfite reductase [NADPH] hemoprotein beta-component"/>
    <property type="match status" value="1"/>
</dbReference>
<dbReference type="Gene3D" id="3.30.413.10">
    <property type="entry name" value="Sulfite Reductase Hemoprotein, domain 1"/>
    <property type="match status" value="2"/>
</dbReference>
<dbReference type="HAMAP" id="MF_01540">
    <property type="entry name" value="CysI"/>
    <property type="match status" value="1"/>
</dbReference>
<dbReference type="InterPro" id="IPR011786">
    <property type="entry name" value="CysI"/>
</dbReference>
<dbReference type="InterPro" id="IPR005117">
    <property type="entry name" value="NiRdtase/SiRdtase_haem-b_fer"/>
</dbReference>
<dbReference type="InterPro" id="IPR036136">
    <property type="entry name" value="Nit/Sulf_reduc_fer-like_dom_sf"/>
</dbReference>
<dbReference type="InterPro" id="IPR006067">
    <property type="entry name" value="NO2/SO3_Rdtase_4Fe4S_dom"/>
</dbReference>
<dbReference type="InterPro" id="IPR045169">
    <property type="entry name" value="NO2/SO3_Rdtase_4Fe4S_prot"/>
</dbReference>
<dbReference type="InterPro" id="IPR045854">
    <property type="entry name" value="NO2/SO3_Rdtase_4Fe4S_sf"/>
</dbReference>
<dbReference type="InterPro" id="IPR006066">
    <property type="entry name" value="NO2/SO3_Rdtase_FeS/sirohaem_BS"/>
</dbReference>
<dbReference type="NCBIfam" id="TIGR02041">
    <property type="entry name" value="CysI"/>
    <property type="match status" value="1"/>
</dbReference>
<dbReference type="NCBIfam" id="NF010029">
    <property type="entry name" value="PRK13504.1"/>
    <property type="match status" value="1"/>
</dbReference>
<dbReference type="PANTHER" id="PTHR11493:SF47">
    <property type="entry name" value="SULFITE REDUCTASE [NADPH] SUBUNIT BETA"/>
    <property type="match status" value="1"/>
</dbReference>
<dbReference type="PANTHER" id="PTHR11493">
    <property type="entry name" value="SULFITE REDUCTASE [NADPH] SUBUNIT BETA-RELATED"/>
    <property type="match status" value="1"/>
</dbReference>
<dbReference type="Pfam" id="PF01077">
    <property type="entry name" value="NIR_SIR"/>
    <property type="match status" value="1"/>
</dbReference>
<dbReference type="Pfam" id="PF03460">
    <property type="entry name" value="NIR_SIR_ferr"/>
    <property type="match status" value="2"/>
</dbReference>
<dbReference type="PRINTS" id="PR00397">
    <property type="entry name" value="SIROHAEM"/>
</dbReference>
<dbReference type="SUPFAM" id="SSF56014">
    <property type="entry name" value="Nitrite and sulphite reductase 4Fe-4S domain-like"/>
    <property type="match status" value="2"/>
</dbReference>
<dbReference type="SUPFAM" id="SSF55124">
    <property type="entry name" value="Nitrite/Sulfite reductase N-terminal domain-like"/>
    <property type="match status" value="2"/>
</dbReference>
<dbReference type="PROSITE" id="PS00365">
    <property type="entry name" value="NIR_SIR"/>
    <property type="match status" value="1"/>
</dbReference>
<evidence type="ECO:0000255" key="1">
    <source>
        <dbReference type="HAMAP-Rule" id="MF_01540"/>
    </source>
</evidence>
<reference key="1">
    <citation type="submission" date="2009-07" db="EMBL/GenBank/DDBJ databases">
        <title>Complete sequence of Pectobacterium carotovorum subsp. carotovorum PC1.</title>
        <authorList>
            <consortium name="US DOE Joint Genome Institute"/>
            <person name="Lucas S."/>
            <person name="Copeland A."/>
            <person name="Lapidus A."/>
            <person name="Glavina del Rio T."/>
            <person name="Tice H."/>
            <person name="Bruce D."/>
            <person name="Goodwin L."/>
            <person name="Pitluck S."/>
            <person name="Munk A.C."/>
            <person name="Brettin T."/>
            <person name="Detter J.C."/>
            <person name="Han C."/>
            <person name="Tapia R."/>
            <person name="Larimer F."/>
            <person name="Land M."/>
            <person name="Hauser L."/>
            <person name="Kyrpides N."/>
            <person name="Mikhailova N."/>
            <person name="Balakrishnan V."/>
            <person name="Glasner J."/>
            <person name="Perna N.T."/>
        </authorList>
    </citation>
    <scope>NUCLEOTIDE SEQUENCE [LARGE SCALE GENOMIC DNA]</scope>
    <source>
        <strain>PC1</strain>
    </source>
</reference>
<comment type="function">
    <text evidence="1">Component of the sulfite reductase complex that catalyzes the 6-electron reduction of sulfite to sulfide. This is one of several activities required for the biosynthesis of L-cysteine from sulfate.</text>
</comment>
<comment type="catalytic activity">
    <reaction evidence="1">
        <text>hydrogen sulfide + 3 NADP(+) + 3 H2O = sulfite + 3 NADPH + 4 H(+)</text>
        <dbReference type="Rhea" id="RHEA:13801"/>
        <dbReference type="ChEBI" id="CHEBI:15377"/>
        <dbReference type="ChEBI" id="CHEBI:15378"/>
        <dbReference type="ChEBI" id="CHEBI:17359"/>
        <dbReference type="ChEBI" id="CHEBI:29919"/>
        <dbReference type="ChEBI" id="CHEBI:57783"/>
        <dbReference type="ChEBI" id="CHEBI:58349"/>
        <dbReference type="EC" id="1.8.1.2"/>
    </reaction>
</comment>
<comment type="cofactor">
    <cofactor evidence="1">
        <name>siroheme</name>
        <dbReference type="ChEBI" id="CHEBI:60052"/>
    </cofactor>
    <text evidence="1">Binds 1 siroheme per subunit.</text>
</comment>
<comment type="cofactor">
    <cofactor evidence="1">
        <name>[4Fe-4S] cluster</name>
        <dbReference type="ChEBI" id="CHEBI:49883"/>
    </cofactor>
    <text evidence="1">Binds 1 [4Fe-4S] cluster per subunit.</text>
</comment>
<comment type="pathway">
    <text evidence="1">Sulfur metabolism; hydrogen sulfide biosynthesis; hydrogen sulfide from sulfite (NADPH route): step 1/1.</text>
</comment>
<comment type="subunit">
    <text evidence="1">Alpha(8)-beta(8). The alpha component is a flavoprotein, the beta component is a hemoprotein.</text>
</comment>
<comment type="similarity">
    <text evidence="1">Belongs to the nitrite and sulfite reductase 4Fe-4S domain family.</text>
</comment>
<gene>
    <name evidence="1" type="primary">cysI1</name>
    <name type="ordered locus">PC1_3306</name>
</gene>
<accession>C6DCZ7</accession>
<feature type="chain" id="PRO_0000388510" description="Sulfite reductase [NADPH] hemoprotein beta-component 1">
    <location>
        <begin position="1"/>
        <end position="564"/>
    </location>
</feature>
<feature type="binding site" evidence="1">
    <location>
        <position position="426"/>
    </location>
    <ligand>
        <name>[4Fe-4S] cluster</name>
        <dbReference type="ChEBI" id="CHEBI:49883"/>
    </ligand>
</feature>
<feature type="binding site" evidence="1">
    <location>
        <position position="432"/>
    </location>
    <ligand>
        <name>[4Fe-4S] cluster</name>
        <dbReference type="ChEBI" id="CHEBI:49883"/>
    </ligand>
</feature>
<feature type="binding site" evidence="1">
    <location>
        <position position="471"/>
    </location>
    <ligand>
        <name>[4Fe-4S] cluster</name>
        <dbReference type="ChEBI" id="CHEBI:49883"/>
    </ligand>
</feature>
<feature type="binding site" evidence="1">
    <location>
        <position position="475"/>
    </location>
    <ligand>
        <name>[4Fe-4S] cluster</name>
        <dbReference type="ChEBI" id="CHEBI:49883"/>
    </ligand>
</feature>
<feature type="binding site" description="axial binding residue" evidence="1">
    <location>
        <position position="475"/>
    </location>
    <ligand>
        <name>siroheme</name>
        <dbReference type="ChEBI" id="CHEBI:60052"/>
    </ligand>
    <ligandPart>
        <name>Fe</name>
        <dbReference type="ChEBI" id="CHEBI:18248"/>
    </ligandPart>
</feature>
<name>CYSI1_PECCP</name>
<organism>
    <name type="scientific">Pectobacterium carotovorum subsp. carotovorum (strain PC1)</name>
    <dbReference type="NCBI Taxonomy" id="561230"/>
    <lineage>
        <taxon>Bacteria</taxon>
        <taxon>Pseudomonadati</taxon>
        <taxon>Pseudomonadota</taxon>
        <taxon>Gammaproteobacteria</taxon>
        <taxon>Enterobacterales</taxon>
        <taxon>Pectobacteriaceae</taxon>
        <taxon>Pectobacterium</taxon>
    </lineage>
</organism>
<proteinExistence type="inferred from homology"/>
<sequence>MSDKKLSDNERLKTQSNYLRGTIQDDLADPLTGGFVADNFQLIRFHGMYQQDDRDIRQERIAQKLEPLHTVMLRVRLPGGIITPHQWLGIDAFAREHTLYGSIRITNRQTVQLHGVLKDDIKPVHKLLNHLGLDSRATAGDVNRNVLCTANPVESVLHRQSWEWAKKISEHLLPRTNAYAEVWLDKEKIIQPDDEPILGKSYLPRKFKTAVVIPPQNDVDIHANDLSFVAIGDGDQLVGFNVLMGGGLAMTQGDTSTYPRLATEFGFIPLAHTLAIAEAVVSTQRDWGNRENRRNAKTKYTLERVGADVFKAEVERRSGVTFSPLKPYVFSERGDRIGWVEGIDGKYHLTLFIPSGRLLDKPGLPNKSGIAAIARVHNGDFRLTANQNIIIAGVASDDKAQIDALARQYGLLDSSLSSQRKDSMACVSFPTCPLAMAEAERVLPDVVSQIEHLLHKYGVGDESFVFRITGCPNGCGRAMLAEVGLIGRAVGRYSLYIGGNREGTRIPRLYKDNIDVPTLFDEIEKLIALWAKERNIGEGFGDFVIRAKIIMPVINAPVDFHTAV</sequence>